<name>UVRC_KORVE</name>
<sequence length="610" mass="70175">MDLHQKIRTLPTSPGVYLYKNAEGEIIYVGKAKNLRSRVGSYFVRGADENSKTGSLLREAVDVEYIVVDNEKEALALENNLIKQKKPRFNILLRDDKTYPYIKLTMGEKWPRVYVTRRLKKDGSEYYGPFFPANLAYRVVDLIHRNFLVPSCYIDLRRYHPRPCLQHYIGRCLGPCVEGLTNEVQYGEAVKDVKLFLEGRHSDLKQSLTARMNKAAEGMQFELAAKYRDLITTVEDLHQKQRIAAAEGDDADVFGYHYENHMVAVNLFHMRGGKVLDRRDFFFEDLGEMEATGGLNTGEFFSTLLQQIYLDNKYVPRTIYVPVEFEDREALCEILSEQMHRKIDINVPQRGDKRSLIDLVAQNAKQSYDQRFRVMRPQTDVLKSVLQDTLELPELPNRIECFDISHIQGAETVASMVVWEDGKMKKSDYRKFIIKTVQGVDDFASMREVVTRRYKRIVEENQPMPSLVLIDGGVGQLHAAAGALEAIGITNQPLASIAKREEIIYVHGREDEPIRIDHHSPVLHIIQLIRDEAHRFAITFHRKRREIRDRSNELLEIPGIGEQAMKRLLRHFGSIQSIRTANATSLEAVVNRTQAEAILAHFRAEETTRS</sequence>
<proteinExistence type="inferred from homology"/>
<accession>Q1ILY2</accession>
<protein>
    <recommendedName>
        <fullName evidence="1">UvrABC system protein C</fullName>
        <shortName evidence="1">Protein UvrC</shortName>
    </recommendedName>
    <alternativeName>
        <fullName evidence="1">Excinuclease ABC subunit C</fullName>
    </alternativeName>
</protein>
<comment type="function">
    <text evidence="1">The UvrABC repair system catalyzes the recognition and processing of DNA lesions. UvrC both incises the 5' and 3' sides of the lesion. The N-terminal half is responsible for the 3' incision and the C-terminal half is responsible for the 5' incision.</text>
</comment>
<comment type="subunit">
    <text evidence="1">Interacts with UvrB in an incision complex.</text>
</comment>
<comment type="subcellular location">
    <subcellularLocation>
        <location evidence="1">Cytoplasm</location>
    </subcellularLocation>
</comment>
<comment type="similarity">
    <text evidence="1">Belongs to the UvrC family.</text>
</comment>
<gene>
    <name evidence="1" type="primary">uvrC</name>
    <name type="ordered locus">Acid345_3117</name>
</gene>
<keyword id="KW-0963">Cytoplasm</keyword>
<keyword id="KW-0227">DNA damage</keyword>
<keyword id="KW-0228">DNA excision</keyword>
<keyword id="KW-0234">DNA repair</keyword>
<keyword id="KW-0267">Excision nuclease</keyword>
<keyword id="KW-1185">Reference proteome</keyword>
<keyword id="KW-0742">SOS response</keyword>
<organism>
    <name type="scientific">Koribacter versatilis (strain Ellin345)</name>
    <dbReference type="NCBI Taxonomy" id="204669"/>
    <lineage>
        <taxon>Bacteria</taxon>
        <taxon>Pseudomonadati</taxon>
        <taxon>Acidobacteriota</taxon>
        <taxon>Terriglobia</taxon>
        <taxon>Terriglobales</taxon>
        <taxon>Candidatus Korobacteraceae</taxon>
        <taxon>Candidatus Korobacter</taxon>
    </lineage>
</organism>
<dbReference type="EMBL" id="CP000360">
    <property type="protein sequence ID" value="ABF42118.1"/>
    <property type="molecule type" value="Genomic_DNA"/>
</dbReference>
<dbReference type="RefSeq" id="WP_011523917.1">
    <property type="nucleotide sequence ID" value="NC_008009.1"/>
</dbReference>
<dbReference type="SMR" id="Q1ILY2"/>
<dbReference type="STRING" id="204669.Acid345_3117"/>
<dbReference type="EnsemblBacteria" id="ABF42118">
    <property type="protein sequence ID" value="ABF42118"/>
    <property type="gene ID" value="Acid345_3117"/>
</dbReference>
<dbReference type="KEGG" id="aba:Acid345_3117"/>
<dbReference type="eggNOG" id="COG0322">
    <property type="taxonomic scope" value="Bacteria"/>
</dbReference>
<dbReference type="HOGENOM" id="CLU_014841_3_2_0"/>
<dbReference type="OrthoDB" id="9804933at2"/>
<dbReference type="Proteomes" id="UP000002432">
    <property type="component" value="Chromosome"/>
</dbReference>
<dbReference type="GO" id="GO:0005737">
    <property type="term" value="C:cytoplasm"/>
    <property type="evidence" value="ECO:0007669"/>
    <property type="project" value="UniProtKB-SubCell"/>
</dbReference>
<dbReference type="GO" id="GO:0009380">
    <property type="term" value="C:excinuclease repair complex"/>
    <property type="evidence" value="ECO:0007669"/>
    <property type="project" value="InterPro"/>
</dbReference>
<dbReference type="GO" id="GO:0003677">
    <property type="term" value="F:DNA binding"/>
    <property type="evidence" value="ECO:0007669"/>
    <property type="project" value="UniProtKB-UniRule"/>
</dbReference>
<dbReference type="GO" id="GO:0009381">
    <property type="term" value="F:excinuclease ABC activity"/>
    <property type="evidence" value="ECO:0007669"/>
    <property type="project" value="UniProtKB-UniRule"/>
</dbReference>
<dbReference type="GO" id="GO:0006289">
    <property type="term" value="P:nucleotide-excision repair"/>
    <property type="evidence" value="ECO:0007669"/>
    <property type="project" value="UniProtKB-UniRule"/>
</dbReference>
<dbReference type="GO" id="GO:0009432">
    <property type="term" value="P:SOS response"/>
    <property type="evidence" value="ECO:0007669"/>
    <property type="project" value="UniProtKB-UniRule"/>
</dbReference>
<dbReference type="CDD" id="cd10434">
    <property type="entry name" value="GIY-YIG_UvrC_Cho"/>
    <property type="match status" value="1"/>
</dbReference>
<dbReference type="FunFam" id="3.30.420.340:FF:000001">
    <property type="entry name" value="UvrABC system protein C"/>
    <property type="match status" value="1"/>
</dbReference>
<dbReference type="FunFam" id="3.40.1440.10:FF:000001">
    <property type="entry name" value="UvrABC system protein C"/>
    <property type="match status" value="1"/>
</dbReference>
<dbReference type="Gene3D" id="1.10.150.20">
    <property type="entry name" value="5' to 3' exonuclease, C-terminal subdomain"/>
    <property type="match status" value="1"/>
</dbReference>
<dbReference type="Gene3D" id="3.40.1440.10">
    <property type="entry name" value="GIY-YIG endonuclease"/>
    <property type="match status" value="1"/>
</dbReference>
<dbReference type="Gene3D" id="4.10.860.10">
    <property type="entry name" value="UVR domain"/>
    <property type="match status" value="1"/>
</dbReference>
<dbReference type="Gene3D" id="3.30.420.340">
    <property type="entry name" value="UvrC, RNAse H endonuclease domain"/>
    <property type="match status" value="1"/>
</dbReference>
<dbReference type="HAMAP" id="MF_00203">
    <property type="entry name" value="UvrC"/>
    <property type="match status" value="1"/>
</dbReference>
<dbReference type="InterPro" id="IPR000305">
    <property type="entry name" value="GIY-YIG_endonuc"/>
</dbReference>
<dbReference type="InterPro" id="IPR035901">
    <property type="entry name" value="GIY-YIG_endonuc_sf"/>
</dbReference>
<dbReference type="InterPro" id="IPR047296">
    <property type="entry name" value="GIY-YIG_UvrC_Cho"/>
</dbReference>
<dbReference type="InterPro" id="IPR010994">
    <property type="entry name" value="RuvA_2-like"/>
</dbReference>
<dbReference type="InterPro" id="IPR001943">
    <property type="entry name" value="UVR_dom"/>
</dbReference>
<dbReference type="InterPro" id="IPR036876">
    <property type="entry name" value="UVR_dom_sf"/>
</dbReference>
<dbReference type="InterPro" id="IPR050066">
    <property type="entry name" value="UvrABC_protein_C"/>
</dbReference>
<dbReference type="InterPro" id="IPR004791">
    <property type="entry name" value="UvrC"/>
</dbReference>
<dbReference type="InterPro" id="IPR001162">
    <property type="entry name" value="UvrC_RNase_H_dom"/>
</dbReference>
<dbReference type="InterPro" id="IPR038476">
    <property type="entry name" value="UvrC_RNase_H_dom_sf"/>
</dbReference>
<dbReference type="NCBIfam" id="NF001824">
    <property type="entry name" value="PRK00558.1-5"/>
    <property type="match status" value="1"/>
</dbReference>
<dbReference type="NCBIfam" id="NF011263">
    <property type="entry name" value="PRK14669.1"/>
    <property type="match status" value="1"/>
</dbReference>
<dbReference type="NCBIfam" id="TIGR00194">
    <property type="entry name" value="uvrC"/>
    <property type="match status" value="1"/>
</dbReference>
<dbReference type="PANTHER" id="PTHR30562:SF1">
    <property type="entry name" value="UVRABC SYSTEM PROTEIN C"/>
    <property type="match status" value="1"/>
</dbReference>
<dbReference type="PANTHER" id="PTHR30562">
    <property type="entry name" value="UVRC/OXIDOREDUCTASE"/>
    <property type="match status" value="1"/>
</dbReference>
<dbReference type="Pfam" id="PF01541">
    <property type="entry name" value="GIY-YIG"/>
    <property type="match status" value="1"/>
</dbReference>
<dbReference type="Pfam" id="PF14520">
    <property type="entry name" value="HHH_5"/>
    <property type="match status" value="1"/>
</dbReference>
<dbReference type="Pfam" id="PF02151">
    <property type="entry name" value="UVR"/>
    <property type="match status" value="1"/>
</dbReference>
<dbReference type="Pfam" id="PF22920">
    <property type="entry name" value="UvrC_RNaseH"/>
    <property type="match status" value="1"/>
</dbReference>
<dbReference type="Pfam" id="PF08459">
    <property type="entry name" value="UvrC_RNaseH_dom"/>
    <property type="match status" value="1"/>
</dbReference>
<dbReference type="SMART" id="SM00465">
    <property type="entry name" value="GIYc"/>
    <property type="match status" value="1"/>
</dbReference>
<dbReference type="SUPFAM" id="SSF46600">
    <property type="entry name" value="C-terminal UvrC-binding domain of UvrB"/>
    <property type="match status" value="1"/>
</dbReference>
<dbReference type="SUPFAM" id="SSF82771">
    <property type="entry name" value="GIY-YIG endonuclease"/>
    <property type="match status" value="1"/>
</dbReference>
<dbReference type="SUPFAM" id="SSF47781">
    <property type="entry name" value="RuvA domain 2-like"/>
    <property type="match status" value="1"/>
</dbReference>
<dbReference type="PROSITE" id="PS50164">
    <property type="entry name" value="GIY_YIG"/>
    <property type="match status" value="1"/>
</dbReference>
<dbReference type="PROSITE" id="PS50151">
    <property type="entry name" value="UVR"/>
    <property type="match status" value="1"/>
</dbReference>
<dbReference type="PROSITE" id="PS50165">
    <property type="entry name" value="UVRC"/>
    <property type="match status" value="1"/>
</dbReference>
<reference key="1">
    <citation type="journal article" date="2009" name="Appl. Environ. Microbiol.">
        <title>Three genomes from the phylum Acidobacteria provide insight into the lifestyles of these microorganisms in soils.</title>
        <authorList>
            <person name="Ward N.L."/>
            <person name="Challacombe J.F."/>
            <person name="Janssen P.H."/>
            <person name="Henrissat B."/>
            <person name="Coutinho P.M."/>
            <person name="Wu M."/>
            <person name="Xie G."/>
            <person name="Haft D.H."/>
            <person name="Sait M."/>
            <person name="Badger J."/>
            <person name="Barabote R.D."/>
            <person name="Bradley B."/>
            <person name="Brettin T.S."/>
            <person name="Brinkac L.M."/>
            <person name="Bruce D."/>
            <person name="Creasy T."/>
            <person name="Daugherty S.C."/>
            <person name="Davidsen T.M."/>
            <person name="DeBoy R.T."/>
            <person name="Detter J.C."/>
            <person name="Dodson R.J."/>
            <person name="Durkin A.S."/>
            <person name="Ganapathy A."/>
            <person name="Gwinn-Giglio M."/>
            <person name="Han C.S."/>
            <person name="Khouri H."/>
            <person name="Kiss H."/>
            <person name="Kothari S.P."/>
            <person name="Madupu R."/>
            <person name="Nelson K.E."/>
            <person name="Nelson W.C."/>
            <person name="Paulsen I."/>
            <person name="Penn K."/>
            <person name="Ren Q."/>
            <person name="Rosovitz M.J."/>
            <person name="Selengut J.D."/>
            <person name="Shrivastava S."/>
            <person name="Sullivan S.A."/>
            <person name="Tapia R."/>
            <person name="Thompson L.S."/>
            <person name="Watkins K.L."/>
            <person name="Yang Q."/>
            <person name="Yu C."/>
            <person name="Zafar N."/>
            <person name="Zhou L."/>
            <person name="Kuske C.R."/>
        </authorList>
    </citation>
    <scope>NUCLEOTIDE SEQUENCE [LARGE SCALE GENOMIC DNA]</scope>
    <source>
        <strain>Ellin345</strain>
    </source>
</reference>
<evidence type="ECO:0000255" key="1">
    <source>
        <dbReference type="HAMAP-Rule" id="MF_00203"/>
    </source>
</evidence>
<feature type="chain" id="PRO_0000264859" description="UvrABC system protein C">
    <location>
        <begin position="1"/>
        <end position="610"/>
    </location>
</feature>
<feature type="domain" description="GIY-YIG" evidence="1">
    <location>
        <begin position="12"/>
        <end position="91"/>
    </location>
</feature>
<feature type="domain" description="UVR" evidence="1">
    <location>
        <begin position="202"/>
        <end position="237"/>
    </location>
</feature>